<reference key="1">
    <citation type="journal article" date="1992" name="Nucleic Acids Res.">
        <title>Systematic sequencing of the Escherichia coli genome: analysis of the 0-2.4 min region.</title>
        <authorList>
            <person name="Yura T."/>
            <person name="Mori H."/>
            <person name="Nagai H."/>
            <person name="Nagata T."/>
            <person name="Ishihama A."/>
            <person name="Fujita N."/>
            <person name="Isono K."/>
            <person name="Mizobuchi K."/>
            <person name="Nakata A."/>
        </authorList>
    </citation>
    <scope>NUCLEOTIDE SEQUENCE [LARGE SCALE GENOMIC DNA]</scope>
    <source>
        <strain>K12</strain>
    </source>
</reference>
<reference key="2">
    <citation type="journal article" date="1997" name="Science">
        <title>The complete genome sequence of Escherichia coli K-12.</title>
        <authorList>
            <person name="Blattner F.R."/>
            <person name="Plunkett G. III"/>
            <person name="Bloch C.A."/>
            <person name="Perna N.T."/>
            <person name="Burland V."/>
            <person name="Riley M."/>
            <person name="Collado-Vides J."/>
            <person name="Glasner J.D."/>
            <person name="Rode C.K."/>
            <person name="Mayhew G.F."/>
            <person name="Gregor J."/>
            <person name="Davis N.W."/>
            <person name="Kirkpatrick H.A."/>
            <person name="Goeden M.A."/>
            <person name="Rose D.J."/>
            <person name="Mau B."/>
            <person name="Shao Y."/>
        </authorList>
    </citation>
    <scope>NUCLEOTIDE SEQUENCE [LARGE SCALE GENOMIC DNA]</scope>
    <source>
        <strain>K12 / MG1655 / ATCC 47076</strain>
    </source>
</reference>
<reference key="3">
    <citation type="journal article" date="2006" name="Mol. Syst. Biol.">
        <title>Highly accurate genome sequences of Escherichia coli K-12 strains MG1655 and W3110.</title>
        <authorList>
            <person name="Hayashi K."/>
            <person name="Morooka N."/>
            <person name="Yamamoto Y."/>
            <person name="Fujita K."/>
            <person name="Isono K."/>
            <person name="Choi S."/>
            <person name="Ohtsubo E."/>
            <person name="Baba T."/>
            <person name="Wanner B.L."/>
            <person name="Mori H."/>
            <person name="Horiuchi T."/>
        </authorList>
    </citation>
    <scope>NUCLEOTIDE SEQUENCE [LARGE SCALE GENOMIC DNA]</scope>
    <source>
        <strain>K12 / W3110 / ATCC 27325 / DSM 5911</strain>
    </source>
</reference>
<reference key="4">
    <citation type="journal article" date="1994" name="Gene">
        <title>A frequently amplified region in Leishmania contains a gene conserved in prokaryotes and eukaryotes.</title>
        <authorList>
            <person name="Myler P.J."/>
            <person name="Venkataraman G.M."/>
            <person name="Lodes M.J."/>
            <person name="Stuart K.D."/>
        </authorList>
    </citation>
    <scope>IDENTIFICATION</scope>
</reference>
<reference key="5">
    <citation type="journal article" date="1995" name="RNA">
        <title>A dual-specificity pseudouridine synthase: an Escherichia coli synthase purified and cloned on the basis of its specificity for psi 746 in 23S RNA is also specific for psi 32 in tRNA(phe).</title>
        <authorList>
            <person name="Wrzesinski J."/>
            <person name="Nurse K."/>
            <person name="Bakin A."/>
            <person name="Lane B.G."/>
            <person name="Ofengand J."/>
        </authorList>
    </citation>
    <scope>FUNCTION</scope>
    <scope>CATALYTIC ACTIVITY</scope>
    <scope>SUBSTRATE SPECIFICITY</scope>
    <scope>PARTIAL PROTEIN SEQUENCE</scope>
</reference>
<reference key="6">
    <citation type="journal article" date="1999" name="Biochemistry">
        <title>Role of cysteine residues in pseudouridine synthases of different families.</title>
        <authorList>
            <person name="Ramamurthy V."/>
            <person name="Swann S.L."/>
            <person name="Spedaliere C.J."/>
            <person name="Mueller E.G."/>
        </authorList>
    </citation>
    <scope>MUTAGENESIS OF CYS-117 AND CYS-128</scope>
    <source>
        <strain>BLR-DE3</strain>
        <strain>K12 / JM109 / ATCC 53323</strain>
    </source>
</reference>
<reference key="7">
    <citation type="journal article" date="1999" name="J. Biol. Chem.">
        <title>Functional effect of deletion and mutation of the Escherichia coli ribosomal RNA and tRNA pseudouridine synthase RluA.</title>
        <authorList>
            <person name="Raychaudhuri S."/>
            <person name="Niu L."/>
            <person name="Conrad J."/>
            <person name="Lane B.G."/>
            <person name="Ofengand J."/>
        </authorList>
    </citation>
    <scope>FUNCTION</scope>
    <scope>MUTAGENESIS OF ASP-64</scope>
    <scope>ACTIVE SITE</scope>
    <source>
        <strain>BL21-DE3</strain>
        <strain>K12 / MG1655 / ATCC 47076</strain>
    </source>
</reference>
<reference key="8">
    <citation type="journal article" date="2000" name="Biochemistry">
        <title>Functional importance of motif I of pseudouridine synthases: mutagenesis of aligned lysine and proline residues.</title>
        <authorList>
            <person name="Spedaliere C.J."/>
            <person name="Hamilton C.S."/>
            <person name="Mueller E.G."/>
        </authorList>
    </citation>
    <scope>MUTAGENESIS OF LYS-28 AND PRO-29</scope>
    <source>
        <strain>BLR-DE3</strain>
    </source>
</reference>
<comment type="function">
    <text evidence="1 4">Dual specificity enzyme that catalyzes the synthesis of pseudouridine from uracil-746 in 23S ribosomal RNA and from uracil-32 in the anticodon stem and loop of transfer RNAs.</text>
</comment>
<comment type="catalytic activity">
    <reaction evidence="4">
        <text>uridine(32) in tRNA = pseudouridine(32) in tRNA</text>
        <dbReference type="Rhea" id="RHEA:42544"/>
        <dbReference type="Rhea" id="RHEA-COMP:10107"/>
        <dbReference type="Rhea" id="RHEA-COMP:10108"/>
        <dbReference type="ChEBI" id="CHEBI:65314"/>
        <dbReference type="ChEBI" id="CHEBI:65315"/>
        <dbReference type="EC" id="5.4.99.28"/>
    </reaction>
</comment>
<comment type="catalytic activity">
    <reaction evidence="4">
        <text>uridine(746) in 23S rRNA = pseudouridine(746) in 23S rRNA</text>
        <dbReference type="Rhea" id="RHEA:42548"/>
        <dbReference type="Rhea" id="RHEA-COMP:10109"/>
        <dbReference type="Rhea" id="RHEA-COMP:10110"/>
        <dbReference type="ChEBI" id="CHEBI:65314"/>
        <dbReference type="ChEBI" id="CHEBI:65315"/>
        <dbReference type="EC" id="5.4.99.29"/>
    </reaction>
</comment>
<comment type="similarity">
    <text evidence="5">Belongs to the pseudouridine synthase RluA family.</text>
</comment>
<keyword id="KW-0002">3D-structure</keyword>
<keyword id="KW-0903">Direct protein sequencing</keyword>
<keyword id="KW-0413">Isomerase</keyword>
<keyword id="KW-1185">Reference proteome</keyword>
<keyword id="KW-0698">rRNA processing</keyword>
<keyword id="KW-0819">tRNA processing</keyword>
<proteinExistence type="evidence at protein level"/>
<sequence length="219" mass="24861">MGMENYNPPQEPWLVILYQDDHIMVVNKPSGLLSVPGRLEEHKDSVMTRIQRDYPQAESVHRLDMATSGVIVVALTKAAERELKRQFREREPKKQYVARVWGHPSPAEGLVDLPLICDWPNRPKQKVCYETGKPAQTEYEVVEYAADNTARVVLKPITGRSHQLRVHMLALGHPILGDRFYASPEARAMAPRLLLHAEMLTITHPAYGNSMTFKAPADF</sequence>
<accession>P0AA37</accession>
<accession>P39219</accession>
<accession>Q2MCG7</accession>
<accession>Q83MG7</accession>
<dbReference type="EC" id="5.4.99.28" evidence="4"/>
<dbReference type="EC" id="5.4.99.29" evidence="4"/>
<dbReference type="EMBL" id="U00096">
    <property type="protein sequence ID" value="AAC73169.1"/>
    <property type="molecule type" value="Genomic_DNA"/>
</dbReference>
<dbReference type="EMBL" id="AP009048">
    <property type="protein sequence ID" value="BAE76039.1"/>
    <property type="molecule type" value="Genomic_DNA"/>
</dbReference>
<dbReference type="PIR" id="B64727">
    <property type="entry name" value="B64727"/>
</dbReference>
<dbReference type="RefSeq" id="NP_414600.1">
    <property type="nucleotide sequence ID" value="NC_000913.3"/>
</dbReference>
<dbReference type="RefSeq" id="WP_000525176.1">
    <property type="nucleotide sequence ID" value="NZ_STEB01000010.1"/>
</dbReference>
<dbReference type="PDB" id="2I82">
    <property type="method" value="X-ray"/>
    <property type="resolution" value="2.05 A"/>
    <property type="chains" value="A/B/C/D=3-219"/>
</dbReference>
<dbReference type="PDBsum" id="2I82"/>
<dbReference type="SMR" id="P0AA37"/>
<dbReference type="BioGRID" id="4262040">
    <property type="interactions" value="44"/>
</dbReference>
<dbReference type="BioGRID" id="850621">
    <property type="interactions" value="3"/>
</dbReference>
<dbReference type="DIP" id="DIP-47988N"/>
<dbReference type="FunCoup" id="P0AA37">
    <property type="interactions" value="260"/>
</dbReference>
<dbReference type="IntAct" id="P0AA37">
    <property type="interactions" value="4"/>
</dbReference>
<dbReference type="STRING" id="511145.b0058"/>
<dbReference type="jPOST" id="P0AA37"/>
<dbReference type="PaxDb" id="511145-b0058"/>
<dbReference type="EnsemblBacteria" id="AAC73169">
    <property type="protein sequence ID" value="AAC73169"/>
    <property type="gene ID" value="b0058"/>
</dbReference>
<dbReference type="GeneID" id="93777379"/>
<dbReference type="GeneID" id="946262"/>
<dbReference type="KEGG" id="ecj:JW0057"/>
<dbReference type="KEGG" id="eco:b0058"/>
<dbReference type="KEGG" id="ecoc:C3026_00295"/>
<dbReference type="PATRIC" id="fig|1411691.4.peg.2225"/>
<dbReference type="EchoBASE" id="EB2493"/>
<dbReference type="eggNOG" id="COG0564">
    <property type="taxonomic scope" value="Bacteria"/>
</dbReference>
<dbReference type="HOGENOM" id="CLU_016902_11_1_6"/>
<dbReference type="InParanoid" id="P0AA37"/>
<dbReference type="OMA" id="YGFCEPA"/>
<dbReference type="OrthoDB" id="9807829at2"/>
<dbReference type="PhylomeDB" id="P0AA37"/>
<dbReference type="BioCyc" id="EcoCyc:EG12609-MONOMER"/>
<dbReference type="BioCyc" id="MetaCyc:EG12609-MONOMER"/>
<dbReference type="BRENDA" id="5.4.99.28">
    <property type="organism ID" value="2026"/>
</dbReference>
<dbReference type="BRENDA" id="5.4.99.29">
    <property type="organism ID" value="2026"/>
</dbReference>
<dbReference type="EvolutionaryTrace" id="P0AA37"/>
<dbReference type="PRO" id="PR:P0AA37"/>
<dbReference type="Proteomes" id="UP000000625">
    <property type="component" value="Chromosome"/>
</dbReference>
<dbReference type="GO" id="GO:0160142">
    <property type="term" value="F:23S rRNA pseudouridine(746) synthase activity"/>
    <property type="evidence" value="ECO:0007669"/>
    <property type="project" value="UniProtKB-EC"/>
</dbReference>
<dbReference type="GO" id="GO:0009982">
    <property type="term" value="F:pseudouridine synthase activity"/>
    <property type="evidence" value="ECO:0000314"/>
    <property type="project" value="EcoCyc"/>
</dbReference>
<dbReference type="GO" id="GO:0003723">
    <property type="term" value="F:RNA binding"/>
    <property type="evidence" value="ECO:0007669"/>
    <property type="project" value="InterPro"/>
</dbReference>
<dbReference type="GO" id="GO:0120159">
    <property type="term" value="F:rRNA pseudouridine synthase activity"/>
    <property type="evidence" value="ECO:0000314"/>
    <property type="project" value="EcoCyc"/>
</dbReference>
<dbReference type="GO" id="GO:0106029">
    <property type="term" value="F:tRNA pseudouridine synthase activity"/>
    <property type="evidence" value="ECO:0000314"/>
    <property type="project" value="EcoCyc"/>
</dbReference>
<dbReference type="GO" id="GO:0160151">
    <property type="term" value="F:tRNA pseudouridine(32) synthase activity"/>
    <property type="evidence" value="ECO:0007669"/>
    <property type="project" value="UniProtKB-EC"/>
</dbReference>
<dbReference type="GO" id="GO:0000455">
    <property type="term" value="P:enzyme-directed rRNA pseudouridine synthesis"/>
    <property type="evidence" value="ECO:0000315"/>
    <property type="project" value="EcoCyc"/>
</dbReference>
<dbReference type="GO" id="GO:0001522">
    <property type="term" value="P:pseudouridine synthesis"/>
    <property type="evidence" value="ECO:0000315"/>
    <property type="project" value="EcoliWiki"/>
</dbReference>
<dbReference type="GO" id="GO:0009451">
    <property type="term" value="P:RNA modification"/>
    <property type="evidence" value="ECO:0000315"/>
    <property type="project" value="EcoliWiki"/>
</dbReference>
<dbReference type="GO" id="GO:0006364">
    <property type="term" value="P:rRNA processing"/>
    <property type="evidence" value="ECO:0000315"/>
    <property type="project" value="EcoliWiki"/>
</dbReference>
<dbReference type="GO" id="GO:0031118">
    <property type="term" value="P:rRNA pseudouridine synthesis"/>
    <property type="evidence" value="ECO:0000315"/>
    <property type="project" value="EcoliWiki"/>
</dbReference>
<dbReference type="GO" id="GO:0008033">
    <property type="term" value="P:tRNA processing"/>
    <property type="evidence" value="ECO:0000315"/>
    <property type="project" value="EcoliWiki"/>
</dbReference>
<dbReference type="GO" id="GO:0031119">
    <property type="term" value="P:tRNA pseudouridine synthesis"/>
    <property type="evidence" value="ECO:0000315"/>
    <property type="project" value="EcoCyc"/>
</dbReference>
<dbReference type="CDD" id="cd02869">
    <property type="entry name" value="PseudoU_synth_RluA_like"/>
    <property type="match status" value="1"/>
</dbReference>
<dbReference type="FunFam" id="3.30.2350.10:FF:000005">
    <property type="entry name" value="Pseudouridine synthase"/>
    <property type="match status" value="1"/>
</dbReference>
<dbReference type="Gene3D" id="3.30.2350.10">
    <property type="entry name" value="Pseudouridine synthase"/>
    <property type="match status" value="1"/>
</dbReference>
<dbReference type="InterPro" id="IPR020103">
    <property type="entry name" value="PsdUridine_synth_cat_dom_sf"/>
</dbReference>
<dbReference type="InterPro" id="IPR006224">
    <property type="entry name" value="PsdUridine_synth_RluA-like_CS"/>
</dbReference>
<dbReference type="InterPro" id="IPR006225">
    <property type="entry name" value="PsdUridine_synth_RluC/D"/>
</dbReference>
<dbReference type="InterPro" id="IPR006145">
    <property type="entry name" value="PsdUridine_synth_RsuA/RluA"/>
</dbReference>
<dbReference type="InterPro" id="IPR050188">
    <property type="entry name" value="RluA_PseudoU_synthase"/>
</dbReference>
<dbReference type="NCBIfam" id="NF007543">
    <property type="entry name" value="PRK10158.1"/>
    <property type="match status" value="1"/>
</dbReference>
<dbReference type="NCBIfam" id="TIGR00005">
    <property type="entry name" value="rluA_subfam"/>
    <property type="match status" value="1"/>
</dbReference>
<dbReference type="PANTHER" id="PTHR21600:SF91">
    <property type="entry name" value="DUAL-SPECIFICITY RNA PSEUDOURIDINE SYNTHASE RLUA"/>
    <property type="match status" value="1"/>
</dbReference>
<dbReference type="PANTHER" id="PTHR21600">
    <property type="entry name" value="MITOCHONDRIAL RNA PSEUDOURIDINE SYNTHASE"/>
    <property type="match status" value="1"/>
</dbReference>
<dbReference type="Pfam" id="PF00849">
    <property type="entry name" value="PseudoU_synth_2"/>
    <property type="match status" value="1"/>
</dbReference>
<dbReference type="SUPFAM" id="SSF55120">
    <property type="entry name" value="Pseudouridine synthase"/>
    <property type="match status" value="1"/>
</dbReference>
<dbReference type="PROSITE" id="PS01129">
    <property type="entry name" value="PSI_RLU"/>
    <property type="match status" value="1"/>
</dbReference>
<name>RLUA_ECOLI</name>
<feature type="initiator methionine" description="Removed">
    <location>
        <position position="1"/>
    </location>
</feature>
<feature type="chain" id="PRO_0000162651" description="Dual-specificity RNA pseudouridine synthase RluA">
    <location>
        <begin position="2"/>
        <end position="219"/>
    </location>
</feature>
<feature type="active site" evidence="1">
    <location>
        <position position="64"/>
    </location>
</feature>
<feature type="mutagenesis site" description="Forms inclusion bodies, indicating precipitation even within the cell." evidence="3">
    <original>K</original>
    <variation>M</variation>
    <variation>R</variation>
    <location>
        <position position="28"/>
    </location>
</feature>
<feature type="mutagenesis site" description="Reduced structural stability and decrease in activity." evidence="3">
    <original>P</original>
    <variation>G</variation>
    <variation>L</variation>
    <location>
        <position position="29"/>
    </location>
</feature>
<feature type="mutagenesis site" description="Loss of activity." evidence="1">
    <original>D</original>
    <variation>N</variation>
    <variation>T</variation>
    <location>
        <position position="64"/>
    </location>
</feature>
<feature type="mutagenesis site" description="No change in activity." evidence="2">
    <original>C</original>
    <variation>A</variation>
    <location>
        <position position="117"/>
    </location>
</feature>
<feature type="mutagenesis site" description="No change in activity." evidence="2">
    <original>C</original>
    <variation>A</variation>
    <location>
        <position position="128"/>
    </location>
</feature>
<feature type="strand" evidence="6">
    <location>
        <begin position="11"/>
        <end position="13"/>
    </location>
</feature>
<feature type="strand" evidence="6">
    <location>
        <begin position="16"/>
        <end position="19"/>
    </location>
</feature>
<feature type="strand" evidence="6">
    <location>
        <begin position="21"/>
        <end position="28"/>
    </location>
</feature>
<feature type="strand" evidence="6">
    <location>
        <begin position="32"/>
        <end position="35"/>
    </location>
</feature>
<feature type="helix" evidence="6">
    <location>
        <begin position="40"/>
        <end position="42"/>
    </location>
</feature>
<feature type="helix" evidence="6">
    <location>
        <begin position="46"/>
        <end position="53"/>
    </location>
</feature>
<feature type="strand" evidence="6">
    <location>
        <begin position="58"/>
        <end position="61"/>
    </location>
</feature>
<feature type="strand" evidence="6">
    <location>
        <begin position="68"/>
        <end position="76"/>
    </location>
</feature>
<feature type="helix" evidence="6">
    <location>
        <begin position="77"/>
        <end position="88"/>
    </location>
</feature>
<feature type="strand" evidence="6">
    <location>
        <begin position="92"/>
        <end position="102"/>
    </location>
</feature>
<feature type="strand" evidence="6">
    <location>
        <begin position="105"/>
        <end position="112"/>
    </location>
</feature>
<feature type="strand" evidence="6">
    <location>
        <begin position="115"/>
        <end position="117"/>
    </location>
</feature>
<feature type="helix" evidence="6">
    <location>
        <begin position="119"/>
        <end position="121"/>
    </location>
</feature>
<feature type="strand" evidence="6">
    <location>
        <begin position="125"/>
        <end position="127"/>
    </location>
</feature>
<feature type="turn" evidence="6">
    <location>
        <begin position="129"/>
        <end position="131"/>
    </location>
</feature>
<feature type="strand" evidence="6">
    <location>
        <begin position="136"/>
        <end position="145"/>
    </location>
</feature>
<feature type="turn" evidence="6">
    <location>
        <begin position="146"/>
        <end position="148"/>
    </location>
</feature>
<feature type="strand" evidence="6">
    <location>
        <begin position="149"/>
        <end position="158"/>
    </location>
</feature>
<feature type="helix" evidence="6">
    <location>
        <begin position="163"/>
        <end position="170"/>
    </location>
</feature>
<feature type="turn" evidence="6">
    <location>
        <begin position="179"/>
        <end position="181"/>
    </location>
</feature>
<feature type="helix" evidence="6">
    <location>
        <begin position="184"/>
        <end position="188"/>
    </location>
</feature>
<feature type="strand" evidence="6">
    <location>
        <begin position="195"/>
        <end position="203"/>
    </location>
</feature>
<feature type="turn" evidence="6">
    <location>
        <begin position="205"/>
        <end position="207"/>
    </location>
</feature>
<feature type="strand" evidence="6">
    <location>
        <begin position="210"/>
        <end position="214"/>
    </location>
</feature>
<evidence type="ECO:0000269" key="1">
    <source>
    </source>
</evidence>
<evidence type="ECO:0000269" key="2">
    <source>
    </source>
</evidence>
<evidence type="ECO:0000269" key="3">
    <source>
    </source>
</evidence>
<evidence type="ECO:0000269" key="4">
    <source>
    </source>
</evidence>
<evidence type="ECO:0000305" key="5"/>
<evidence type="ECO:0007829" key="6">
    <source>
        <dbReference type="PDB" id="2I82"/>
    </source>
</evidence>
<protein>
    <recommendedName>
        <fullName evidence="5">Dual-specificity RNA pseudouridine synthase RluA</fullName>
        <ecNumber evidence="4">5.4.99.28</ecNumber>
        <ecNumber evidence="4">5.4.99.29</ecNumber>
    </recommendedName>
    <alternativeName>
        <fullName evidence="5">23S rRNA pseudouridine(746) synthase</fullName>
    </alternativeName>
    <alternativeName>
        <fullName evidence="5">Ribosomal large subunit pseudouridine synthase A</fullName>
    </alternativeName>
    <alternativeName>
        <fullName evidence="5">rRNA pseudouridylate synthase A</fullName>
    </alternativeName>
    <alternativeName>
        <fullName evidence="5">rRNA-uridine isomerase A</fullName>
    </alternativeName>
    <alternativeName>
        <fullName evidence="5">tRNA pseudouridine(32) synthase</fullName>
    </alternativeName>
</protein>
<gene>
    <name type="primary">rluA</name>
    <name type="synonym">yabO</name>
    <name type="ordered locus">b0058</name>
    <name type="ordered locus">JW0057</name>
</gene>
<organism>
    <name type="scientific">Escherichia coli (strain K12)</name>
    <dbReference type="NCBI Taxonomy" id="83333"/>
    <lineage>
        <taxon>Bacteria</taxon>
        <taxon>Pseudomonadati</taxon>
        <taxon>Pseudomonadota</taxon>
        <taxon>Gammaproteobacteria</taxon>
        <taxon>Enterobacterales</taxon>
        <taxon>Enterobacteriaceae</taxon>
        <taxon>Escherichia</taxon>
    </lineage>
</organism>